<comment type="subunit">
    <text>Heterotetramer of two type I and two type II keratins.</text>
</comment>
<comment type="miscellaneous">
    <text>There are two types of cytoskeletal and microfibrillar keratin: I (acidic; 40-55 kDa) and II (neutral to basic; 56-70 kDa).</text>
</comment>
<comment type="similarity">
    <text evidence="1">Belongs to the intermediate filament family.</text>
</comment>
<dbReference type="EMBL" id="X07679">
    <property type="protein sequence ID" value="CAA30526.1"/>
    <property type="molecule type" value="Genomic_DNA"/>
</dbReference>
<dbReference type="EMBL" id="BC074154">
    <property type="protein sequence ID" value="AAH74154.1"/>
    <property type="molecule type" value="mRNA"/>
</dbReference>
<dbReference type="EMBL" id="M11032">
    <property type="protein sequence ID" value="AAA49895.1"/>
    <property type="molecule type" value="mRNA"/>
</dbReference>
<dbReference type="PIR" id="S01631">
    <property type="entry name" value="S01631"/>
</dbReference>
<dbReference type="RefSeq" id="NP_001081288.1">
    <property type="nucleotide sequence ID" value="NM_001087819.1"/>
</dbReference>
<dbReference type="SMR" id="P08778"/>
<dbReference type="BioGRID" id="99095">
    <property type="interactions" value="1"/>
</dbReference>
<dbReference type="GeneID" id="397756"/>
<dbReference type="KEGG" id="xla:397756"/>
<dbReference type="CTD" id="397756"/>
<dbReference type="OrthoDB" id="2441647at2759"/>
<dbReference type="Proteomes" id="UP000186698">
    <property type="component" value="Chromosome 9_10S"/>
</dbReference>
<dbReference type="Bgee" id="397756">
    <property type="expression patterns" value="Expressed in neurula embryo and 18 other cell types or tissues"/>
</dbReference>
<dbReference type="GO" id="GO:0005856">
    <property type="term" value="C:cytoskeleton"/>
    <property type="evidence" value="ECO:0000318"/>
    <property type="project" value="GO_Central"/>
</dbReference>
<dbReference type="GO" id="GO:0005882">
    <property type="term" value="C:intermediate filament"/>
    <property type="evidence" value="ECO:0007669"/>
    <property type="project" value="UniProtKB-KW"/>
</dbReference>
<dbReference type="GO" id="GO:0005198">
    <property type="term" value="F:structural molecule activity"/>
    <property type="evidence" value="ECO:0007669"/>
    <property type="project" value="InterPro"/>
</dbReference>
<dbReference type="GO" id="GO:0030855">
    <property type="term" value="P:epithelial cell differentiation"/>
    <property type="evidence" value="ECO:0000318"/>
    <property type="project" value="GO_Central"/>
</dbReference>
<dbReference type="GO" id="GO:0045109">
    <property type="term" value="P:intermediate filament organization"/>
    <property type="evidence" value="ECO:0000318"/>
    <property type="project" value="GO_Central"/>
</dbReference>
<dbReference type="FunFam" id="1.20.5.1160:FF:000002">
    <property type="entry name" value="Type I keratin 10"/>
    <property type="match status" value="1"/>
</dbReference>
<dbReference type="FunFam" id="1.20.5.170:FF:000002">
    <property type="entry name" value="Type I keratin KA11"/>
    <property type="match status" value="1"/>
</dbReference>
<dbReference type="FunFam" id="1.20.5.500:FF:000001">
    <property type="entry name" value="Type II keratin 23"/>
    <property type="match status" value="1"/>
</dbReference>
<dbReference type="Gene3D" id="1.20.5.170">
    <property type="match status" value="1"/>
</dbReference>
<dbReference type="Gene3D" id="1.20.5.500">
    <property type="entry name" value="Single helix bin"/>
    <property type="match status" value="1"/>
</dbReference>
<dbReference type="Gene3D" id="1.20.5.1160">
    <property type="entry name" value="Vasodilator-stimulated phosphoprotein"/>
    <property type="match status" value="1"/>
</dbReference>
<dbReference type="InterPro" id="IPR018039">
    <property type="entry name" value="IF_conserved"/>
</dbReference>
<dbReference type="InterPro" id="IPR039008">
    <property type="entry name" value="IF_rod_dom"/>
</dbReference>
<dbReference type="InterPro" id="IPR002957">
    <property type="entry name" value="Keratin_I"/>
</dbReference>
<dbReference type="PANTHER" id="PTHR23239">
    <property type="entry name" value="INTERMEDIATE FILAMENT"/>
    <property type="match status" value="1"/>
</dbReference>
<dbReference type="PANTHER" id="PTHR23239:SF378">
    <property type="entry name" value="KERATIN, TYPE I CYTOSKELETAL 47 KDA"/>
    <property type="match status" value="1"/>
</dbReference>
<dbReference type="Pfam" id="PF00038">
    <property type="entry name" value="Filament"/>
    <property type="match status" value="1"/>
</dbReference>
<dbReference type="PRINTS" id="PR01248">
    <property type="entry name" value="TYPE1KERATIN"/>
</dbReference>
<dbReference type="SMART" id="SM01391">
    <property type="entry name" value="Filament"/>
    <property type="match status" value="1"/>
</dbReference>
<dbReference type="SUPFAM" id="SSF64593">
    <property type="entry name" value="Intermediate filament protein, coiled coil region"/>
    <property type="match status" value="2"/>
</dbReference>
<dbReference type="PROSITE" id="PS00226">
    <property type="entry name" value="IF_ROD_1"/>
    <property type="match status" value="1"/>
</dbReference>
<dbReference type="PROSITE" id="PS51842">
    <property type="entry name" value="IF_ROD_2"/>
    <property type="match status" value="1"/>
</dbReference>
<sequence length="433" mass="47807">MSYSTRSISQSARFGVLASPGVNRARSVAGGASTVRMSSANVTSSAFGGSSAFAGSSAFAGSPAFNVSVTSNNGKETMQNLNDRLANYLDRVRSLEQANHELELKIREYLDKKAAVGSLDYSGYYNTINLLRSQINDATIDNTRLVLSIDNAKLAADDFKIKYESEMAIRTGAESDIVGLRRVLDELTLNKTDLELEIESLKEELIYLKKNHEEELAVVRSSARGNVDVQVDSAPPVDLAQIMADVRSQYESMMEKNRQELEACYKGQSENLNHEVATNTAALQTSKTAITDLKRTIQSLEIELQSLLSMKGALEGTLAETEAQYGAQLNHLQAMITQVEMELQNLRSDADHQSLEYKRLLDAKTRLEMEIATYRRLLEGEDTRFSQTETQKAVTIVSKEQSSSSIKKVKTVIEEVVDGKVVSSRVEELTETS</sequence>
<feature type="chain" id="PRO_0000063683" description="Keratin, type I cytoskeletal 47 kDa">
    <location>
        <begin position="1"/>
        <end position="433"/>
    </location>
</feature>
<feature type="domain" description="IF rod" evidence="1">
    <location>
        <begin position="74"/>
        <end position="385"/>
    </location>
</feature>
<feature type="region of interest" description="Head">
    <location>
        <begin position="1"/>
        <end position="73"/>
    </location>
</feature>
<feature type="region of interest" description="Coil 1A">
    <location>
        <begin position="74"/>
        <end position="109"/>
    </location>
</feature>
<feature type="region of interest" description="Linker 1">
    <location>
        <begin position="110"/>
        <end position="127"/>
    </location>
</feature>
<feature type="region of interest" description="Coil 1B">
    <location>
        <begin position="128"/>
        <end position="219"/>
    </location>
</feature>
<feature type="region of interest" description="Linker 12">
    <location>
        <begin position="220"/>
        <end position="242"/>
    </location>
</feature>
<feature type="region of interest" description="Coil 2">
    <location>
        <begin position="243"/>
        <end position="381"/>
    </location>
</feature>
<feature type="region of interest" description="Tail">
    <location>
        <begin position="382"/>
        <end position="433"/>
    </location>
</feature>
<feature type="sequence conflict" description="In Ref. 1; CAA30526." evidence="2" ref="1">
    <original>A</original>
    <variation>S</variation>
    <location>
        <position position="18"/>
    </location>
</feature>
<feature type="sequence conflict" description="In Ref. 1; CAA30526." evidence="2" ref="1">
    <original>A</original>
    <variation>S</variation>
    <location>
        <position position="58"/>
    </location>
</feature>
<feature type="sequence conflict" description="In Ref. 1; CAA30526." evidence="2" ref="1">
    <original>N</original>
    <variation>H</variation>
    <location>
        <position position="72"/>
    </location>
</feature>
<feature type="sequence conflict" description="In Ref. 1; CAA30526." evidence="2" ref="1">
    <original>G</original>
    <variation>R</variation>
    <location>
        <position position="326"/>
    </location>
</feature>
<keyword id="KW-0175">Coiled coil</keyword>
<keyword id="KW-0403">Intermediate filament</keyword>
<keyword id="KW-0416">Keratin</keyword>
<keyword id="KW-1185">Reference proteome</keyword>
<name>K1C5_XENLA</name>
<proteinExistence type="evidence at transcript level"/>
<protein>
    <recommendedName>
        <fullName>Keratin, type I cytoskeletal 47 kDa</fullName>
    </recommendedName>
</protein>
<accession>P08778</accession>
<accession>Q6GMB4</accession>
<evidence type="ECO:0000255" key="1">
    <source>
        <dbReference type="PROSITE-ProRule" id="PRU01188"/>
    </source>
</evidence>
<evidence type="ECO:0000305" key="2"/>
<gene>
    <name type="primary">xk70a</name>
</gene>
<organism>
    <name type="scientific">Xenopus laevis</name>
    <name type="common">African clawed frog</name>
    <dbReference type="NCBI Taxonomy" id="8355"/>
    <lineage>
        <taxon>Eukaryota</taxon>
        <taxon>Metazoa</taxon>
        <taxon>Chordata</taxon>
        <taxon>Craniata</taxon>
        <taxon>Vertebrata</taxon>
        <taxon>Euteleostomi</taxon>
        <taxon>Amphibia</taxon>
        <taxon>Batrachia</taxon>
        <taxon>Anura</taxon>
        <taxon>Pipoidea</taxon>
        <taxon>Pipidae</taxon>
        <taxon>Xenopodinae</taxon>
        <taxon>Xenopus</taxon>
        <taxon>Xenopus</taxon>
    </lineage>
</organism>
<reference key="1">
    <citation type="journal article" date="1988" name="Nucleic Acids Res.">
        <title>The gene encoding Xenopus embryonic epidermal keratin XK70A exhibits a hybrid type I-type II intron pattern.</title>
        <authorList>
            <person name="Krasner A.S."/>
            <person name="Cheng A.K."/>
            <person name="Dawid I.B."/>
            <person name="Sargent T.D."/>
        </authorList>
    </citation>
    <scope>NUCLEOTIDE SEQUENCE [GENOMIC DNA]</scope>
    <source>
        <strain>HD-1</strain>
    </source>
</reference>
<reference key="2">
    <citation type="submission" date="2004-06" db="EMBL/GenBank/DDBJ databases">
        <authorList>
            <consortium name="NIH - Xenopus Gene Collection (XGC) project"/>
        </authorList>
    </citation>
    <scope>NUCLEOTIDE SEQUENCE [LARGE SCALE MRNA]</scope>
    <source>
        <tissue>Kidney</tissue>
    </source>
</reference>
<reference key="3">
    <citation type="journal article" date="1985" name="Mol. Cell. Biol.">
        <title>Developmentally regulated cytokeratin gene in Xenopus laevis.</title>
        <authorList>
            <person name="Winkles J.A."/>
            <person name="Sargent T.D."/>
            <person name="Parry D.A.D."/>
            <person name="Jonas E."/>
            <person name="Dawid I.B."/>
        </authorList>
    </citation>
    <scope>NUCLEOTIDE SEQUENCE [MRNA] OF 11-433</scope>
</reference>